<keyword id="KW-0010">Activator</keyword>
<keyword id="KW-0025">Alternative splicing</keyword>
<keyword id="KW-0053">Apoptosis</keyword>
<keyword id="KW-0131">Cell cycle</keyword>
<keyword id="KW-0132">Cell division</keyword>
<keyword id="KW-0137">Centromere</keyword>
<keyword id="KW-0158">Chromosome</keyword>
<keyword id="KW-0175">Coiled coil</keyword>
<keyword id="KW-1017">Isopeptide bond</keyword>
<keyword id="KW-0995">Kinetochore</keyword>
<keyword id="KW-0498">Mitosis</keyword>
<keyword id="KW-0539">Nucleus</keyword>
<keyword id="KW-0597">Phosphoprotein</keyword>
<keyword id="KW-1185">Reference proteome</keyword>
<keyword id="KW-0678">Repressor</keyword>
<keyword id="KW-0804">Transcription</keyword>
<keyword id="KW-0805">Transcription regulation</keyword>
<keyword id="KW-0832">Ubl conjugation</keyword>
<dbReference type="EMBL" id="AK005779">
    <property type="protein sequence ID" value="BAB24235.1"/>
    <property type="molecule type" value="mRNA"/>
</dbReference>
<dbReference type="EMBL" id="AK013373">
    <property type="protein sequence ID" value="BAB28815.1"/>
    <property type="molecule type" value="mRNA"/>
</dbReference>
<dbReference type="EMBL" id="AK015557">
    <property type="protein sequence ID" value="BAB29892.1"/>
    <property type="molecule type" value="mRNA"/>
</dbReference>
<dbReference type="EMBL" id="AK045037">
    <property type="protein sequence ID" value="BAC32192.1"/>
    <property type="molecule type" value="mRNA"/>
</dbReference>
<dbReference type="EMBL" id="AK165072">
    <property type="protein sequence ID" value="BAE38024.1"/>
    <property type="molecule type" value="mRNA"/>
</dbReference>
<dbReference type="EMBL" id="AK166362">
    <property type="protein sequence ID" value="BAE38732.1"/>
    <property type="molecule type" value="mRNA"/>
</dbReference>
<dbReference type="EMBL" id="BC049557">
    <property type="protein sequence ID" value="AAH49557.1"/>
    <property type="molecule type" value="mRNA"/>
</dbReference>
<dbReference type="CCDS" id="CCDS18387.1">
    <molecule id="Q9CQ82-1"/>
</dbReference>
<dbReference type="RefSeq" id="NP_001349903.1">
    <molecule id="Q9CQ82-2"/>
    <property type="nucleotide sequence ID" value="NM_001362974.1"/>
</dbReference>
<dbReference type="RefSeq" id="NP_080624.1">
    <molecule id="Q9CQ82-1"/>
    <property type="nucleotide sequence ID" value="NM_026348.4"/>
</dbReference>
<dbReference type="SMR" id="Q9CQ82"/>
<dbReference type="ComplexPortal" id="CPX-5704">
    <property type="entry name" value="Kinetochore CCAN complex"/>
</dbReference>
<dbReference type="CORUM" id="Q9CQ82"/>
<dbReference type="FunCoup" id="Q9CQ82">
    <property type="interactions" value="1417"/>
</dbReference>
<dbReference type="STRING" id="10090.ENSMUSP00000117153"/>
<dbReference type="iPTMnet" id="Q9CQ82"/>
<dbReference type="PhosphoSitePlus" id="Q9CQ82"/>
<dbReference type="jPOST" id="Q9CQ82"/>
<dbReference type="PaxDb" id="10090-ENSMUSP00000117153"/>
<dbReference type="PeptideAtlas" id="Q9CQ82"/>
<dbReference type="ProteomicsDB" id="281190">
    <molecule id="Q9CQ82-1"/>
</dbReference>
<dbReference type="ProteomicsDB" id="281191">
    <molecule id="Q9CQ82-2"/>
</dbReference>
<dbReference type="Antibodypedia" id="33352">
    <property type="antibodies" value="217 antibodies from 30 providers"/>
</dbReference>
<dbReference type="DNASU" id="67733"/>
<dbReference type="Ensembl" id="ENSMUST00000146258.2">
    <molecule id="Q9CQ82-1"/>
    <property type="protein sequence ID" value="ENSMUSP00000117153.2"/>
    <property type="gene ID" value="ENSMUSG00000028549.18"/>
</dbReference>
<dbReference type="GeneID" id="67733"/>
<dbReference type="KEGG" id="mmu:67733"/>
<dbReference type="UCSC" id="uc008tux.1">
    <molecule id="Q9CQ82-1"/>
    <property type="organism name" value="mouse"/>
</dbReference>
<dbReference type="AGR" id="MGI:1914983"/>
<dbReference type="CTD" id="23421"/>
<dbReference type="MGI" id="MGI:1914983">
    <property type="gene designation" value="Itgb3bp"/>
</dbReference>
<dbReference type="VEuPathDB" id="HostDB:ENSMUSG00000028549"/>
<dbReference type="eggNOG" id="ENOG502S4AR">
    <property type="taxonomic scope" value="Eukaryota"/>
</dbReference>
<dbReference type="GeneTree" id="ENSGT00390000004336"/>
<dbReference type="HOGENOM" id="CLU_122442_0_0_1"/>
<dbReference type="InParanoid" id="Q9CQ82"/>
<dbReference type="OMA" id="FMVVFSK"/>
<dbReference type="OrthoDB" id="8839831at2759"/>
<dbReference type="PhylomeDB" id="Q9CQ82"/>
<dbReference type="TreeFam" id="TF336291"/>
<dbReference type="Reactome" id="R-MMU-141444">
    <property type="pathway name" value="Amplification of signal from unattached kinetochores via a MAD2 inhibitory signal"/>
</dbReference>
<dbReference type="Reactome" id="R-MMU-205043">
    <property type="pathway name" value="NRIF signals cell death from the nucleus"/>
</dbReference>
<dbReference type="Reactome" id="R-MMU-2467813">
    <property type="pathway name" value="Separation of Sister Chromatids"/>
</dbReference>
<dbReference type="Reactome" id="R-MMU-2500257">
    <property type="pathway name" value="Resolution of Sister Chromatid Cohesion"/>
</dbReference>
<dbReference type="Reactome" id="R-MMU-5663220">
    <property type="pathway name" value="RHO GTPases Activate Formins"/>
</dbReference>
<dbReference type="Reactome" id="R-MMU-606279">
    <property type="pathway name" value="Deposition of new CENPA-containing nucleosomes at the centromere"/>
</dbReference>
<dbReference type="Reactome" id="R-MMU-68877">
    <property type="pathway name" value="Mitotic Prometaphase"/>
</dbReference>
<dbReference type="Reactome" id="R-MMU-9648025">
    <property type="pathway name" value="EML4 and NUDC in mitotic spindle formation"/>
</dbReference>
<dbReference type="BioGRID-ORCS" id="67733">
    <property type="hits" value="4 hits in 78 CRISPR screens"/>
</dbReference>
<dbReference type="ChiTaRS" id="Itgb3bp">
    <property type="organism name" value="mouse"/>
</dbReference>
<dbReference type="PRO" id="PR:Q9CQ82"/>
<dbReference type="Proteomes" id="UP000000589">
    <property type="component" value="Chromosome 4"/>
</dbReference>
<dbReference type="RNAct" id="Q9CQ82">
    <property type="molecule type" value="protein"/>
</dbReference>
<dbReference type="Bgee" id="ENSMUSG00000028549">
    <property type="expression patterns" value="Expressed in testis and 65 other cell types or tissues"/>
</dbReference>
<dbReference type="GO" id="GO:0000939">
    <property type="term" value="C:inner kinetochore"/>
    <property type="evidence" value="ECO:0000266"/>
    <property type="project" value="ComplexPortal"/>
</dbReference>
<dbReference type="GO" id="GO:0000776">
    <property type="term" value="C:kinetochore"/>
    <property type="evidence" value="ECO:0000314"/>
    <property type="project" value="MGI"/>
</dbReference>
<dbReference type="GO" id="GO:0005654">
    <property type="term" value="C:nucleoplasm"/>
    <property type="evidence" value="ECO:0007669"/>
    <property type="project" value="Ensembl"/>
</dbReference>
<dbReference type="GO" id="GO:0005634">
    <property type="term" value="C:nucleus"/>
    <property type="evidence" value="ECO:0000303"/>
    <property type="project" value="ComplexPortal"/>
</dbReference>
<dbReference type="GO" id="GO:0006915">
    <property type="term" value="P:apoptotic process"/>
    <property type="evidence" value="ECO:0007669"/>
    <property type="project" value="UniProtKB-KW"/>
</dbReference>
<dbReference type="GO" id="GO:0051301">
    <property type="term" value="P:cell division"/>
    <property type="evidence" value="ECO:0007669"/>
    <property type="project" value="UniProtKB-KW"/>
</dbReference>
<dbReference type="GO" id="GO:0034080">
    <property type="term" value="P:CENP-A containing chromatin assembly"/>
    <property type="evidence" value="ECO:0007669"/>
    <property type="project" value="InterPro"/>
</dbReference>
<dbReference type="GO" id="GO:0007059">
    <property type="term" value="P:chromosome segregation"/>
    <property type="evidence" value="ECO:0000303"/>
    <property type="project" value="ComplexPortal"/>
</dbReference>
<dbReference type="GO" id="GO:1904036">
    <property type="term" value="P:negative regulation of epithelial cell apoptotic process"/>
    <property type="evidence" value="ECO:0000315"/>
    <property type="project" value="MGI"/>
</dbReference>
<dbReference type="GO" id="GO:0050679">
    <property type="term" value="P:positive regulation of epithelial cell proliferation"/>
    <property type="evidence" value="ECO:0000315"/>
    <property type="project" value="MGI"/>
</dbReference>
<dbReference type="GO" id="GO:0006355">
    <property type="term" value="P:regulation of DNA-templated transcription"/>
    <property type="evidence" value="ECO:0007669"/>
    <property type="project" value="InterPro"/>
</dbReference>
<dbReference type="InterPro" id="IPR009601">
    <property type="entry name" value="CENP-R"/>
</dbReference>
<dbReference type="PANTHER" id="PTHR15581">
    <property type="entry name" value="CENTROMERE PROTEIN R"/>
    <property type="match status" value="1"/>
</dbReference>
<dbReference type="PANTHER" id="PTHR15581:SF0">
    <property type="entry name" value="CENTROMERE PROTEIN R"/>
    <property type="match status" value="1"/>
</dbReference>
<dbReference type="Pfam" id="PF06729">
    <property type="entry name" value="CENP-R"/>
    <property type="match status" value="1"/>
</dbReference>
<dbReference type="PIRSF" id="PIRSF011860">
    <property type="entry name" value="NRIF3_coact_rcpt"/>
    <property type="match status" value="1"/>
</dbReference>
<feature type="chain" id="PRO_0000057950" description="Centromere protein R">
    <location>
        <begin position="1"/>
        <end position="176"/>
    </location>
</feature>
<feature type="region of interest" description="DD1">
    <location>
        <begin position="20"/>
        <end position="50"/>
    </location>
</feature>
<feature type="region of interest" description="Disordered" evidence="4">
    <location>
        <begin position="34"/>
        <end position="78"/>
    </location>
</feature>
<feature type="coiled-coil region" evidence="3">
    <location>
        <begin position="82"/>
        <end position="112"/>
    </location>
</feature>
<feature type="short sequence motif" description="Nuclear localization signal" evidence="1">
    <location>
        <begin position="63"/>
        <end position="66"/>
    </location>
</feature>
<feature type="short sequence motif" description="LXXIL motif">
    <location>
        <begin position="171"/>
        <end position="175"/>
    </location>
</feature>
<feature type="compositionally biased region" description="Polar residues" evidence="4">
    <location>
        <begin position="34"/>
        <end position="48"/>
    </location>
</feature>
<feature type="compositionally biased region" description="Basic and acidic residues" evidence="4">
    <location>
        <begin position="51"/>
        <end position="65"/>
    </location>
</feature>
<feature type="modified residue" description="Phosphoserine" evidence="2">
    <location>
        <position position="17"/>
    </location>
</feature>
<feature type="modified residue" description="Phosphoserine" evidence="2">
    <location>
        <position position="28"/>
    </location>
</feature>
<feature type="modified residue" description="Phosphoserine" evidence="2">
    <location>
        <position position="71"/>
    </location>
</feature>
<feature type="cross-link" description="Glycyl lysine isopeptide (Lys-Gly) (interchain with G-Cter in SUMO2)" evidence="2">
    <location>
        <position position="8"/>
    </location>
</feature>
<feature type="cross-link" description="Glycyl lysine isopeptide (Lys-Gly) (interchain with G-Cter in SUMO2)" evidence="2">
    <location>
        <position position="22"/>
    </location>
</feature>
<feature type="splice variant" id="VSP_020453" description="In isoform 2." evidence="6">
    <location>
        <begin position="1"/>
        <end position="77"/>
    </location>
</feature>
<feature type="splice variant" id="VSP_020454" description="In isoform 2." evidence="6">
    <original>TVKDRDG</original>
    <variation>MISLKKI</variation>
    <location>
        <begin position="78"/>
        <end position="84"/>
    </location>
</feature>
<feature type="sequence conflict" description="In Ref. 1; BAE38732." evidence="7" ref="1">
    <original>L</original>
    <variation>V</variation>
    <location>
        <position position="7"/>
    </location>
</feature>
<feature type="sequence conflict" description="In Ref. 1; BAE38732." evidence="7" ref="1">
    <original>P</original>
    <variation>S</variation>
    <location>
        <position position="50"/>
    </location>
</feature>
<feature type="sequence conflict" description="In Ref. 1; BAE38732." evidence="7" ref="1">
    <original>R</original>
    <variation>S</variation>
    <location>
        <position position="82"/>
    </location>
</feature>
<protein>
    <recommendedName>
        <fullName>Centromere protein R</fullName>
        <shortName>CENP-R</shortName>
    </recommendedName>
    <alternativeName>
        <fullName>Nuclear receptor-interacting factor 3</fullName>
    </alternativeName>
</protein>
<proteinExistence type="evidence at protein level"/>
<evidence type="ECO:0000250" key="1"/>
<evidence type="ECO:0000250" key="2">
    <source>
        <dbReference type="UniProtKB" id="Q13352"/>
    </source>
</evidence>
<evidence type="ECO:0000255" key="3"/>
<evidence type="ECO:0000256" key="4">
    <source>
        <dbReference type="SAM" id="MobiDB-lite"/>
    </source>
</evidence>
<evidence type="ECO:0000269" key="5">
    <source>
    </source>
</evidence>
<evidence type="ECO:0000303" key="6">
    <source>
    </source>
</evidence>
<evidence type="ECO:0000305" key="7"/>
<reference key="1">
    <citation type="journal article" date="2005" name="Science">
        <title>The transcriptional landscape of the mammalian genome.</title>
        <authorList>
            <person name="Carninci P."/>
            <person name="Kasukawa T."/>
            <person name="Katayama S."/>
            <person name="Gough J."/>
            <person name="Frith M.C."/>
            <person name="Maeda N."/>
            <person name="Oyama R."/>
            <person name="Ravasi T."/>
            <person name="Lenhard B."/>
            <person name="Wells C."/>
            <person name="Kodzius R."/>
            <person name="Shimokawa K."/>
            <person name="Bajic V.B."/>
            <person name="Brenner S.E."/>
            <person name="Batalov S."/>
            <person name="Forrest A.R."/>
            <person name="Zavolan M."/>
            <person name="Davis M.J."/>
            <person name="Wilming L.G."/>
            <person name="Aidinis V."/>
            <person name="Allen J.E."/>
            <person name="Ambesi-Impiombato A."/>
            <person name="Apweiler R."/>
            <person name="Aturaliya R.N."/>
            <person name="Bailey T.L."/>
            <person name="Bansal M."/>
            <person name="Baxter L."/>
            <person name="Beisel K.W."/>
            <person name="Bersano T."/>
            <person name="Bono H."/>
            <person name="Chalk A.M."/>
            <person name="Chiu K.P."/>
            <person name="Choudhary V."/>
            <person name="Christoffels A."/>
            <person name="Clutterbuck D.R."/>
            <person name="Crowe M.L."/>
            <person name="Dalla E."/>
            <person name="Dalrymple B.P."/>
            <person name="de Bono B."/>
            <person name="Della Gatta G."/>
            <person name="di Bernardo D."/>
            <person name="Down T."/>
            <person name="Engstrom P."/>
            <person name="Fagiolini M."/>
            <person name="Faulkner G."/>
            <person name="Fletcher C.F."/>
            <person name="Fukushima T."/>
            <person name="Furuno M."/>
            <person name="Futaki S."/>
            <person name="Gariboldi M."/>
            <person name="Georgii-Hemming P."/>
            <person name="Gingeras T.R."/>
            <person name="Gojobori T."/>
            <person name="Green R.E."/>
            <person name="Gustincich S."/>
            <person name="Harbers M."/>
            <person name="Hayashi Y."/>
            <person name="Hensch T.K."/>
            <person name="Hirokawa N."/>
            <person name="Hill D."/>
            <person name="Huminiecki L."/>
            <person name="Iacono M."/>
            <person name="Ikeo K."/>
            <person name="Iwama A."/>
            <person name="Ishikawa T."/>
            <person name="Jakt M."/>
            <person name="Kanapin A."/>
            <person name="Katoh M."/>
            <person name="Kawasawa Y."/>
            <person name="Kelso J."/>
            <person name="Kitamura H."/>
            <person name="Kitano H."/>
            <person name="Kollias G."/>
            <person name="Krishnan S.P."/>
            <person name="Kruger A."/>
            <person name="Kummerfeld S.K."/>
            <person name="Kurochkin I.V."/>
            <person name="Lareau L.F."/>
            <person name="Lazarevic D."/>
            <person name="Lipovich L."/>
            <person name="Liu J."/>
            <person name="Liuni S."/>
            <person name="McWilliam S."/>
            <person name="Madan Babu M."/>
            <person name="Madera M."/>
            <person name="Marchionni L."/>
            <person name="Matsuda H."/>
            <person name="Matsuzawa S."/>
            <person name="Miki H."/>
            <person name="Mignone F."/>
            <person name="Miyake S."/>
            <person name="Morris K."/>
            <person name="Mottagui-Tabar S."/>
            <person name="Mulder N."/>
            <person name="Nakano N."/>
            <person name="Nakauchi H."/>
            <person name="Ng P."/>
            <person name="Nilsson R."/>
            <person name="Nishiguchi S."/>
            <person name="Nishikawa S."/>
            <person name="Nori F."/>
            <person name="Ohara O."/>
            <person name="Okazaki Y."/>
            <person name="Orlando V."/>
            <person name="Pang K.C."/>
            <person name="Pavan W.J."/>
            <person name="Pavesi G."/>
            <person name="Pesole G."/>
            <person name="Petrovsky N."/>
            <person name="Piazza S."/>
            <person name="Reed J."/>
            <person name="Reid J.F."/>
            <person name="Ring B.Z."/>
            <person name="Ringwald M."/>
            <person name="Rost B."/>
            <person name="Ruan Y."/>
            <person name="Salzberg S.L."/>
            <person name="Sandelin A."/>
            <person name="Schneider C."/>
            <person name="Schoenbach C."/>
            <person name="Sekiguchi K."/>
            <person name="Semple C.A."/>
            <person name="Seno S."/>
            <person name="Sessa L."/>
            <person name="Sheng Y."/>
            <person name="Shibata Y."/>
            <person name="Shimada H."/>
            <person name="Shimada K."/>
            <person name="Silva D."/>
            <person name="Sinclair B."/>
            <person name="Sperling S."/>
            <person name="Stupka E."/>
            <person name="Sugiura K."/>
            <person name="Sultana R."/>
            <person name="Takenaka Y."/>
            <person name="Taki K."/>
            <person name="Tammoja K."/>
            <person name="Tan S.L."/>
            <person name="Tang S."/>
            <person name="Taylor M.S."/>
            <person name="Tegner J."/>
            <person name="Teichmann S.A."/>
            <person name="Ueda H.R."/>
            <person name="van Nimwegen E."/>
            <person name="Verardo R."/>
            <person name="Wei C.L."/>
            <person name="Yagi K."/>
            <person name="Yamanishi H."/>
            <person name="Zabarovsky E."/>
            <person name="Zhu S."/>
            <person name="Zimmer A."/>
            <person name="Hide W."/>
            <person name="Bult C."/>
            <person name="Grimmond S.M."/>
            <person name="Teasdale R.D."/>
            <person name="Liu E.T."/>
            <person name="Brusic V."/>
            <person name="Quackenbush J."/>
            <person name="Wahlestedt C."/>
            <person name="Mattick J.S."/>
            <person name="Hume D.A."/>
            <person name="Kai C."/>
            <person name="Sasaki D."/>
            <person name="Tomaru Y."/>
            <person name="Fukuda S."/>
            <person name="Kanamori-Katayama M."/>
            <person name="Suzuki M."/>
            <person name="Aoki J."/>
            <person name="Arakawa T."/>
            <person name="Iida J."/>
            <person name="Imamura K."/>
            <person name="Itoh M."/>
            <person name="Kato T."/>
            <person name="Kawaji H."/>
            <person name="Kawagashira N."/>
            <person name="Kawashima T."/>
            <person name="Kojima M."/>
            <person name="Kondo S."/>
            <person name="Konno H."/>
            <person name="Nakano K."/>
            <person name="Ninomiya N."/>
            <person name="Nishio T."/>
            <person name="Okada M."/>
            <person name="Plessy C."/>
            <person name="Shibata K."/>
            <person name="Shiraki T."/>
            <person name="Suzuki S."/>
            <person name="Tagami M."/>
            <person name="Waki K."/>
            <person name="Watahiki A."/>
            <person name="Okamura-Oho Y."/>
            <person name="Suzuki H."/>
            <person name="Kawai J."/>
            <person name="Hayashizaki Y."/>
        </authorList>
    </citation>
    <scope>NUCLEOTIDE SEQUENCE [LARGE SCALE MRNA] (ISOFORMS 1 AND 2)</scope>
    <source>
        <strain>C57BL/6J</strain>
        <tissue>Embryo</tissue>
        <tissue>Mammary gland</tissue>
        <tissue>Oviduct</tissue>
        <tissue>Testis</tissue>
    </source>
</reference>
<reference key="2">
    <citation type="journal article" date="2004" name="Genome Res.">
        <title>The status, quality, and expansion of the NIH full-length cDNA project: the Mammalian Gene Collection (MGC).</title>
        <authorList>
            <consortium name="The MGC Project Team"/>
        </authorList>
    </citation>
    <scope>NUCLEOTIDE SEQUENCE [LARGE SCALE MRNA] (ISOFORM 1)</scope>
    <source>
        <tissue>Testis</tissue>
    </source>
</reference>
<reference key="3">
    <citation type="journal article" date="2019" name="Exp. Cell Res.">
        <title>Fam208a orchestrates interaction protein network essential for early embryonic development and cell division.</title>
        <authorList>
            <person name="Gresakova V."/>
            <person name="Novosadova V."/>
            <person name="Prochazkova M."/>
            <person name="Bhargava S."/>
            <person name="Jenickova I."/>
            <person name="Prochazka J."/>
            <person name="Sedlacek R."/>
        </authorList>
    </citation>
    <scope>INTERACTION WITH TASOR</scope>
    <scope>TISSUE SPECIFICITY</scope>
</reference>
<gene>
    <name type="primary">Itgb3bp</name>
    <name type="synonym">Cenpr</name>
    <name type="synonym">Nrif3</name>
</gene>
<name>CENPR_MOUSE</name>
<comment type="function">
    <text evidence="1">Transcription coregulator that can have both coactivator and corepressor functions. Involved in the coactivation of nuclear receptors for retinoid X (RXRs) and thyroid hormone (TRs) in a ligand-dependent fashion. In contrast, it does not coactivate nuclear receptors for retinoic acid, vitamin D, progesterone receptor, nor glucocorticoid. Acts as a coactivator for estrogen receptor alpha. Acts as a transcriptional corepressor via its interaction with the NFKB1 NF-kappa-B subunit, possibly by interfering with the transactivation domain of NFKB1. Induces apoptosis in breast cancer cells, but not in other cancer cells, via a caspase-2 mediated pathway that involves mitochondrial membrane permeabilization but does not require other caspases. May also act as an inhibitor of cyclin A-associated kinase. Also acts a component of the CENPA-CAD (nucleosome distal) complex, a complex recruited to centromeres which is involved in assembly of kinetochore proteins, mitotic progression and chromosome segregation. May be involved in incorporation of newly synthesized CENPA into centromeres via its interaction with the CENPA-NAC complex (By similarity).</text>
</comment>
<comment type="subunit">
    <text evidence="2 5">Homodimer; mediated by the coiled coil domain. Interacts with CCNA2 and MTA1. Interacts with NFKB1 NF-kappa-B subunit. Component of the CENPA-CAD complex, composed of CENPI, CENPK, CENPL, CENPO, CENPP, CENPQ, CENPR and CENPS. The CENPA-CAD complex interacts with the CENPA-NAC complex, at least composed of CENPA, CENPC, CENPH, CENPM, CENPN, CENPT and CENPU (By similarity). Interacts with TASOR (PubMed:31112734).</text>
</comment>
<comment type="subcellular location">
    <subcellularLocation>
        <location evidence="1">Nucleus</location>
    </subcellularLocation>
    <subcellularLocation>
        <location evidence="1">Chromosome</location>
        <location evidence="1">Centromere</location>
    </subcellularLocation>
    <subcellularLocation>
        <location evidence="1">Chromosome</location>
        <location evidence="1">Centromere</location>
        <location evidence="1">Kinetochore</location>
    </subcellularLocation>
</comment>
<comment type="alternative products">
    <event type="alternative splicing"/>
    <isoform>
        <id>Q9CQ82-1</id>
        <name>1</name>
        <sequence type="displayed"/>
    </isoform>
    <isoform>
        <id>Q9CQ82-2</id>
        <name>2</name>
        <sequence type="described" ref="VSP_020453 VSP_020454"/>
    </isoform>
</comment>
<comment type="tissue specificity">
    <text evidence="5">Expressed in the spermatogonia and spermatocytes.</text>
</comment>
<comment type="domain">
    <text evidence="1">The DD1 domain (also called RepD1 domain) mediates the corepressor function and is essential in the triggering of apoptosis.</text>
</comment>
<comment type="domain">
    <text evidence="1">Contains one Leu-Xaa-Xaa-Ile-Leu (LXXIL) motif, which is essential for the association with nuclear receptors.</text>
</comment>
<accession>Q9CQ82</accession>
<accession>Q3TLR0</accession>
<accession>Q3TNR4</accession>
<sequence length="176" mass="20026">MPVKRSLKLDDQFEKNSFSPSKIVRKKSITAYSPTTGTYQLSPFSSPATPKEQEHRNGPSNETRKRSNLSSPVRQESTVKDRDGFMVLLSKIEISSEKTMEIMKNLSSIQALEGNRQLEDLIGVSLVPCSLKSEARKTKELMTKVIKQKLFEKKKSRITPKDHHLDSFEFLKAILN</sequence>
<organism>
    <name type="scientific">Mus musculus</name>
    <name type="common">Mouse</name>
    <dbReference type="NCBI Taxonomy" id="10090"/>
    <lineage>
        <taxon>Eukaryota</taxon>
        <taxon>Metazoa</taxon>
        <taxon>Chordata</taxon>
        <taxon>Craniata</taxon>
        <taxon>Vertebrata</taxon>
        <taxon>Euteleostomi</taxon>
        <taxon>Mammalia</taxon>
        <taxon>Eutheria</taxon>
        <taxon>Euarchontoglires</taxon>
        <taxon>Glires</taxon>
        <taxon>Rodentia</taxon>
        <taxon>Myomorpha</taxon>
        <taxon>Muroidea</taxon>
        <taxon>Muridae</taxon>
        <taxon>Murinae</taxon>
        <taxon>Mus</taxon>
        <taxon>Mus</taxon>
    </lineage>
</organism>